<organism>
    <name type="scientific">Geobacillus stearothermophilus</name>
    <name type="common">Bacillus stearothermophilus</name>
    <dbReference type="NCBI Taxonomy" id="1422"/>
    <lineage>
        <taxon>Bacteria</taxon>
        <taxon>Bacillati</taxon>
        <taxon>Bacillota</taxon>
        <taxon>Bacilli</taxon>
        <taxon>Bacillales</taxon>
        <taxon>Anoxybacillaceae</taxon>
        <taxon>Geobacillus</taxon>
    </lineage>
</organism>
<name>TRPA_GEOSE</name>
<comment type="function">
    <text evidence="1">The alpha subunit is responsible for the aldol cleavage of indoleglycerol phosphate to indole and glyceraldehyde 3-phosphate.</text>
</comment>
<comment type="catalytic activity">
    <reaction evidence="1">
        <text>(1S,2R)-1-C-(indol-3-yl)glycerol 3-phosphate + L-serine = D-glyceraldehyde 3-phosphate + L-tryptophan + H2O</text>
        <dbReference type="Rhea" id="RHEA:10532"/>
        <dbReference type="ChEBI" id="CHEBI:15377"/>
        <dbReference type="ChEBI" id="CHEBI:33384"/>
        <dbReference type="ChEBI" id="CHEBI:57912"/>
        <dbReference type="ChEBI" id="CHEBI:58866"/>
        <dbReference type="ChEBI" id="CHEBI:59776"/>
        <dbReference type="EC" id="4.2.1.20"/>
    </reaction>
</comment>
<comment type="pathway">
    <text evidence="1">Amino-acid biosynthesis; L-tryptophan biosynthesis; L-tryptophan from chorismate: step 5/5.</text>
</comment>
<comment type="subunit">
    <text evidence="1">Tetramer of two alpha and two beta chains.</text>
</comment>
<comment type="similarity">
    <text evidence="1">Belongs to the TrpA family.</text>
</comment>
<proteinExistence type="inferred from homology"/>
<dbReference type="EC" id="4.2.1.20" evidence="1"/>
<dbReference type="EMBL" id="D00539">
    <property type="protein sequence ID" value="BAA00428.1"/>
    <property type="molecule type" value="Genomic_DNA"/>
</dbReference>
<dbReference type="PIR" id="JT0525">
    <property type="entry name" value="JT0525"/>
</dbReference>
<dbReference type="SMR" id="P19867"/>
<dbReference type="UniPathway" id="UPA00035">
    <property type="reaction ID" value="UER00044"/>
</dbReference>
<dbReference type="GO" id="GO:0005829">
    <property type="term" value="C:cytosol"/>
    <property type="evidence" value="ECO:0007669"/>
    <property type="project" value="TreeGrafter"/>
</dbReference>
<dbReference type="GO" id="GO:0004834">
    <property type="term" value="F:tryptophan synthase activity"/>
    <property type="evidence" value="ECO:0007669"/>
    <property type="project" value="UniProtKB-UniRule"/>
</dbReference>
<dbReference type="CDD" id="cd04724">
    <property type="entry name" value="Tryptophan_synthase_alpha"/>
    <property type="match status" value="1"/>
</dbReference>
<dbReference type="FunFam" id="3.20.20.70:FF:000037">
    <property type="entry name" value="Tryptophan synthase alpha chain"/>
    <property type="match status" value="1"/>
</dbReference>
<dbReference type="Gene3D" id="3.20.20.70">
    <property type="entry name" value="Aldolase class I"/>
    <property type="match status" value="1"/>
</dbReference>
<dbReference type="HAMAP" id="MF_00131">
    <property type="entry name" value="Trp_synth_alpha"/>
    <property type="match status" value="1"/>
</dbReference>
<dbReference type="InterPro" id="IPR013785">
    <property type="entry name" value="Aldolase_TIM"/>
</dbReference>
<dbReference type="InterPro" id="IPR011060">
    <property type="entry name" value="RibuloseP-bd_barrel"/>
</dbReference>
<dbReference type="InterPro" id="IPR018204">
    <property type="entry name" value="Trp_synthase_alpha_AS"/>
</dbReference>
<dbReference type="InterPro" id="IPR002028">
    <property type="entry name" value="Trp_synthase_suA"/>
</dbReference>
<dbReference type="NCBIfam" id="TIGR00262">
    <property type="entry name" value="trpA"/>
    <property type="match status" value="1"/>
</dbReference>
<dbReference type="PANTHER" id="PTHR43406:SF1">
    <property type="entry name" value="TRYPTOPHAN SYNTHASE ALPHA CHAIN, CHLOROPLASTIC"/>
    <property type="match status" value="1"/>
</dbReference>
<dbReference type="PANTHER" id="PTHR43406">
    <property type="entry name" value="TRYPTOPHAN SYNTHASE, ALPHA CHAIN"/>
    <property type="match status" value="1"/>
</dbReference>
<dbReference type="Pfam" id="PF00290">
    <property type="entry name" value="Trp_syntA"/>
    <property type="match status" value="1"/>
</dbReference>
<dbReference type="SUPFAM" id="SSF51366">
    <property type="entry name" value="Ribulose-phoshate binding barrel"/>
    <property type="match status" value="1"/>
</dbReference>
<dbReference type="PROSITE" id="PS00167">
    <property type="entry name" value="TRP_SYNTHASE_ALPHA"/>
    <property type="match status" value="1"/>
</dbReference>
<gene>
    <name evidence="1" type="primary">trpA</name>
</gene>
<accession>P19867</accession>
<keyword id="KW-0028">Amino-acid biosynthesis</keyword>
<keyword id="KW-0057">Aromatic amino acid biosynthesis</keyword>
<keyword id="KW-0456">Lyase</keyword>
<keyword id="KW-0822">Tryptophan biosynthesis</keyword>
<protein>
    <recommendedName>
        <fullName evidence="1">Tryptophan synthase alpha chain</fullName>
        <ecNumber evidence="1">4.2.1.20</ecNumber>
    </recommendedName>
</protein>
<reference key="1">
    <citation type="journal article" date="1989" name="Agric. Biol. Chem.">
        <title>Cloning and sequencing of Bacillus stearothermophilus tryptophan synthase genes.</title>
        <authorList>
            <person name="Ishiwata K."/>
            <person name="Yoshino S."/>
            <person name="Iwamori S."/>
            <person name="Suzuki T."/>
            <person name="Makiguchi N."/>
        </authorList>
    </citation>
    <scope>NUCLEOTIDE SEQUENCE [GENOMIC DNA]</scope>
    <source>
        <strain>ATCC 7953 / DSM 5934 / JCM 9488 / NBRC 13737 / NCIB 8157 / NCTC 10007 / NCA 1518</strain>
    </source>
</reference>
<evidence type="ECO:0000255" key="1">
    <source>
        <dbReference type="HAMAP-Rule" id="MF_00131"/>
    </source>
</evidence>
<feature type="chain" id="PRO_0000098743" description="Tryptophan synthase alpha chain">
    <location>
        <begin position="1"/>
        <end position="269"/>
    </location>
</feature>
<feature type="active site" description="Proton acceptor" evidence="1">
    <location>
        <position position="41"/>
    </location>
</feature>
<feature type="active site" description="Proton acceptor" evidence="1">
    <location>
        <position position="52"/>
    </location>
</feature>
<sequence length="269" mass="28736">MLLLSVNPPLFIPFIVAGDPSPEVTVDLALALEEAGADLLELGVPYSDPLADGPTIQRAAARALAGNMTLPKAIHLVAEMRKKGVTIPIILFTYYNPVLQLGEESFFALARENGANGVLIPDLPFEESGPLRELGERFDLPLISLVAPTSKQRIERIASVAQGFLYCVSSLGVTGMRETLPESLGDFVSEVKRHSRVPVAVGFGISTPEQVAMLKEVCDGVVIGSALVQKVEQLGERLLAPEEKEAAIAEFAAYARSLAAPLHAPCSLR</sequence>